<feature type="chain" id="PRO_1000086943" description="NADH-quinone oxidoreductase subunit H">
    <location>
        <begin position="1"/>
        <end position="410"/>
    </location>
</feature>
<feature type="transmembrane region" description="Helical" evidence="1">
    <location>
        <begin position="16"/>
        <end position="36"/>
    </location>
</feature>
<feature type="transmembrane region" description="Helical" evidence="1">
    <location>
        <begin position="84"/>
        <end position="104"/>
    </location>
</feature>
<feature type="transmembrane region" description="Helical" evidence="1">
    <location>
        <begin position="124"/>
        <end position="144"/>
    </location>
</feature>
<feature type="transmembrane region" description="Helical" evidence="1">
    <location>
        <begin position="165"/>
        <end position="185"/>
    </location>
</feature>
<feature type="transmembrane region" description="Helical" evidence="1">
    <location>
        <begin position="198"/>
        <end position="218"/>
    </location>
</feature>
<feature type="transmembrane region" description="Helical" evidence="1">
    <location>
        <begin position="260"/>
        <end position="280"/>
    </location>
</feature>
<feature type="transmembrane region" description="Helical" evidence="1">
    <location>
        <begin position="288"/>
        <end position="308"/>
    </location>
</feature>
<feature type="transmembrane region" description="Helical" evidence="1">
    <location>
        <begin position="320"/>
        <end position="340"/>
    </location>
</feature>
<feature type="transmembrane region" description="Helical" evidence="1">
    <location>
        <begin position="353"/>
        <end position="373"/>
    </location>
</feature>
<feature type="region of interest" description="Disordered" evidence="2">
    <location>
        <begin position="384"/>
        <end position="410"/>
    </location>
</feature>
<accession>A4TDB2</accession>
<comment type="function">
    <text evidence="1">NDH-1 shuttles electrons from NADH, via FMN and iron-sulfur (Fe-S) centers, to quinones in the respiratory chain. The immediate electron acceptor for the enzyme in this species is believed to be menaquinone. Couples the redox reaction to proton translocation (for every two electrons transferred, four hydrogen ions are translocated across the cytoplasmic membrane), and thus conserves the redox energy in a proton gradient.</text>
</comment>
<comment type="catalytic activity">
    <reaction evidence="1">
        <text>a quinone + NADH + 5 H(+)(in) = a quinol + NAD(+) + 4 H(+)(out)</text>
        <dbReference type="Rhea" id="RHEA:57888"/>
        <dbReference type="ChEBI" id="CHEBI:15378"/>
        <dbReference type="ChEBI" id="CHEBI:24646"/>
        <dbReference type="ChEBI" id="CHEBI:57540"/>
        <dbReference type="ChEBI" id="CHEBI:57945"/>
        <dbReference type="ChEBI" id="CHEBI:132124"/>
    </reaction>
</comment>
<comment type="subunit">
    <text evidence="1">NDH-1 is composed of 14 different subunits. Subunits NuoA, H, J, K, L, M, N constitute the membrane sector of the complex.</text>
</comment>
<comment type="subcellular location">
    <subcellularLocation>
        <location evidence="1">Cell membrane</location>
        <topology evidence="1">Multi-pass membrane protein</topology>
    </subcellularLocation>
</comment>
<comment type="similarity">
    <text evidence="1">Belongs to the complex I subunit 1 family.</text>
</comment>
<protein>
    <recommendedName>
        <fullName evidence="1">NADH-quinone oxidoreductase subunit H</fullName>
        <ecNumber evidence="1">7.1.1.-</ecNumber>
    </recommendedName>
    <alternativeName>
        <fullName evidence="1">NADH dehydrogenase I subunit H</fullName>
    </alternativeName>
    <alternativeName>
        <fullName evidence="1">NDH-1 subunit H</fullName>
    </alternativeName>
</protein>
<dbReference type="EC" id="7.1.1.-" evidence="1"/>
<dbReference type="EMBL" id="CP000656">
    <property type="protein sequence ID" value="ABP46957.1"/>
    <property type="molecule type" value="Genomic_DNA"/>
</dbReference>
<dbReference type="SMR" id="A4TDB2"/>
<dbReference type="STRING" id="350054.Mflv_4488"/>
<dbReference type="KEGG" id="mgi:Mflv_4488"/>
<dbReference type="eggNOG" id="COG1005">
    <property type="taxonomic scope" value="Bacteria"/>
</dbReference>
<dbReference type="HOGENOM" id="CLU_015134_0_0_11"/>
<dbReference type="OrthoDB" id="9803734at2"/>
<dbReference type="GO" id="GO:0005886">
    <property type="term" value="C:plasma membrane"/>
    <property type="evidence" value="ECO:0007669"/>
    <property type="project" value="UniProtKB-SubCell"/>
</dbReference>
<dbReference type="GO" id="GO:0003954">
    <property type="term" value="F:NADH dehydrogenase activity"/>
    <property type="evidence" value="ECO:0007669"/>
    <property type="project" value="TreeGrafter"/>
</dbReference>
<dbReference type="GO" id="GO:0016655">
    <property type="term" value="F:oxidoreductase activity, acting on NAD(P)H, quinone or similar compound as acceptor"/>
    <property type="evidence" value="ECO:0007669"/>
    <property type="project" value="UniProtKB-UniRule"/>
</dbReference>
<dbReference type="GO" id="GO:0048038">
    <property type="term" value="F:quinone binding"/>
    <property type="evidence" value="ECO:0007669"/>
    <property type="project" value="UniProtKB-KW"/>
</dbReference>
<dbReference type="GO" id="GO:0009060">
    <property type="term" value="P:aerobic respiration"/>
    <property type="evidence" value="ECO:0007669"/>
    <property type="project" value="TreeGrafter"/>
</dbReference>
<dbReference type="HAMAP" id="MF_01350">
    <property type="entry name" value="NDH1_NuoH"/>
    <property type="match status" value="1"/>
</dbReference>
<dbReference type="InterPro" id="IPR001694">
    <property type="entry name" value="NADH_UbQ_OxRdtase_su1/FPO"/>
</dbReference>
<dbReference type="InterPro" id="IPR018086">
    <property type="entry name" value="NADH_UbQ_OxRdtase_su1_CS"/>
</dbReference>
<dbReference type="NCBIfam" id="NF004741">
    <property type="entry name" value="PRK06076.1-2"/>
    <property type="match status" value="1"/>
</dbReference>
<dbReference type="NCBIfam" id="NF004743">
    <property type="entry name" value="PRK06076.1-4"/>
    <property type="match status" value="1"/>
</dbReference>
<dbReference type="PANTHER" id="PTHR11432">
    <property type="entry name" value="NADH DEHYDROGENASE SUBUNIT 1"/>
    <property type="match status" value="1"/>
</dbReference>
<dbReference type="PANTHER" id="PTHR11432:SF3">
    <property type="entry name" value="NADH-UBIQUINONE OXIDOREDUCTASE CHAIN 1"/>
    <property type="match status" value="1"/>
</dbReference>
<dbReference type="Pfam" id="PF00146">
    <property type="entry name" value="NADHdh"/>
    <property type="match status" value="1"/>
</dbReference>
<dbReference type="PROSITE" id="PS00667">
    <property type="entry name" value="COMPLEX1_ND1_1"/>
    <property type="match status" value="1"/>
</dbReference>
<dbReference type="PROSITE" id="PS00668">
    <property type="entry name" value="COMPLEX1_ND1_2"/>
    <property type="match status" value="1"/>
</dbReference>
<evidence type="ECO:0000255" key="1">
    <source>
        <dbReference type="HAMAP-Rule" id="MF_01350"/>
    </source>
</evidence>
<evidence type="ECO:0000256" key="2">
    <source>
        <dbReference type="SAM" id="MobiDB-lite"/>
    </source>
</evidence>
<sequence length="410" mass="44895">MTYPDPTLFGHDPWWLILAKSLGVFVFLLLTVLAAILIERKILGRMQLRLGPNRVGPRGLLQSLADGIKLALKEGLVPAGVDKWIYLAAPVISVIPAFMAFAVIPLGPEVSVFGHRTALQLTDLPVAVLYILAVTSIGVYGIVLAGWASGSVYPLLGGLRSSAQVISYEIAMALSFVAVFIYAGTMSTSGIVAAQNDVWFIFLLLPSFLVYLTSMVGETNRAPFDLPEAEGELVGGFHTEYSSLKFAMFMLAEYVNMTTVSALATTLFLGGWHAPWPISIADGANSDWWPLLWFTAKVWLFLFFFMWLRATLPRMRYDQFMRLGWKLLIPVSLAWIAIVATTRAMQNQGYQGWVTALIGVAGVAAILASLLAWRALRARRRRTSHSPPAQSSDHGAFPVPPLPVKEPADA</sequence>
<gene>
    <name evidence="1" type="primary">nuoH</name>
    <name type="ordered locus">Mflv_4488</name>
</gene>
<proteinExistence type="inferred from homology"/>
<keyword id="KW-1003">Cell membrane</keyword>
<keyword id="KW-0472">Membrane</keyword>
<keyword id="KW-0520">NAD</keyword>
<keyword id="KW-0874">Quinone</keyword>
<keyword id="KW-1278">Translocase</keyword>
<keyword id="KW-0812">Transmembrane</keyword>
<keyword id="KW-1133">Transmembrane helix</keyword>
<name>NUOH_MYCGI</name>
<organism>
    <name type="scientific">Mycolicibacterium gilvum (strain PYR-GCK)</name>
    <name type="common">Mycobacterium gilvum (strain PYR-GCK)</name>
    <dbReference type="NCBI Taxonomy" id="350054"/>
    <lineage>
        <taxon>Bacteria</taxon>
        <taxon>Bacillati</taxon>
        <taxon>Actinomycetota</taxon>
        <taxon>Actinomycetes</taxon>
        <taxon>Mycobacteriales</taxon>
        <taxon>Mycobacteriaceae</taxon>
        <taxon>Mycolicibacterium</taxon>
    </lineage>
</organism>
<reference key="1">
    <citation type="submission" date="2007-04" db="EMBL/GenBank/DDBJ databases">
        <title>Complete sequence of chromosome of Mycobacterium gilvum PYR-GCK.</title>
        <authorList>
            <consortium name="US DOE Joint Genome Institute"/>
            <person name="Copeland A."/>
            <person name="Lucas S."/>
            <person name="Lapidus A."/>
            <person name="Barry K."/>
            <person name="Detter J.C."/>
            <person name="Glavina del Rio T."/>
            <person name="Hammon N."/>
            <person name="Israni S."/>
            <person name="Dalin E."/>
            <person name="Tice H."/>
            <person name="Pitluck S."/>
            <person name="Chain P."/>
            <person name="Malfatti S."/>
            <person name="Shin M."/>
            <person name="Vergez L."/>
            <person name="Schmutz J."/>
            <person name="Larimer F."/>
            <person name="Land M."/>
            <person name="Hauser L."/>
            <person name="Kyrpides N."/>
            <person name="Mikhailova N."/>
            <person name="Miller C."/>
            <person name="Richardson P."/>
        </authorList>
    </citation>
    <scope>NUCLEOTIDE SEQUENCE [LARGE SCALE GENOMIC DNA]</scope>
    <source>
        <strain>PYR-GCK</strain>
    </source>
</reference>